<organism>
    <name type="scientific">Dinoroseobacter shibae (strain DSM 16493 / NCIMB 14021 / DFL 12)</name>
    <dbReference type="NCBI Taxonomy" id="398580"/>
    <lineage>
        <taxon>Bacteria</taxon>
        <taxon>Pseudomonadati</taxon>
        <taxon>Pseudomonadota</taxon>
        <taxon>Alphaproteobacteria</taxon>
        <taxon>Rhodobacterales</taxon>
        <taxon>Roseobacteraceae</taxon>
        <taxon>Dinoroseobacter</taxon>
    </lineage>
</organism>
<feature type="chain" id="PRO_1000083155" description="Probable transcriptional regulatory protein Dshi_2762">
    <location>
        <begin position="1"/>
        <end position="246"/>
    </location>
</feature>
<sequence length="246" mass="26832">MAGHSKWANIQHRKGRQDKLRAKLFSKLSKEITVAAKMGDPDPDKNPRLRLAVKEAKSQSVPKDVIERAIKKSLGGEGENYDEIRYEGYGPGGVAVIVEAMTDNRNRTASTVRSTFSKNGGNLGETGSVSFMFERKGQVSYPAEAGDADTVMMAAIEAGAEDVESDESGHIIWCADTDLNEVSTALEAELGESESTKLVWRPTTTTELDLEGMQKLMKLLDALEDDDDVQNVTANFEASDEVMAQL</sequence>
<proteinExistence type="inferred from homology"/>
<comment type="subcellular location">
    <subcellularLocation>
        <location evidence="1">Cytoplasm</location>
    </subcellularLocation>
</comment>
<comment type="similarity">
    <text evidence="1">Belongs to the TACO1 family.</text>
</comment>
<name>Y2762_DINSH</name>
<keyword id="KW-0963">Cytoplasm</keyword>
<keyword id="KW-0238">DNA-binding</keyword>
<keyword id="KW-1185">Reference proteome</keyword>
<keyword id="KW-0804">Transcription</keyword>
<keyword id="KW-0805">Transcription regulation</keyword>
<dbReference type="EMBL" id="CP000830">
    <property type="protein sequence ID" value="ABV94495.1"/>
    <property type="molecule type" value="Genomic_DNA"/>
</dbReference>
<dbReference type="RefSeq" id="WP_012179423.1">
    <property type="nucleotide sequence ID" value="NC_009952.1"/>
</dbReference>
<dbReference type="SMR" id="A8LJ00"/>
<dbReference type="STRING" id="398580.Dshi_2762"/>
<dbReference type="KEGG" id="dsh:Dshi_2762"/>
<dbReference type="eggNOG" id="COG0217">
    <property type="taxonomic scope" value="Bacteria"/>
</dbReference>
<dbReference type="HOGENOM" id="CLU_062974_2_2_5"/>
<dbReference type="OrthoDB" id="9781053at2"/>
<dbReference type="Proteomes" id="UP000006833">
    <property type="component" value="Chromosome"/>
</dbReference>
<dbReference type="GO" id="GO:0005829">
    <property type="term" value="C:cytosol"/>
    <property type="evidence" value="ECO:0007669"/>
    <property type="project" value="TreeGrafter"/>
</dbReference>
<dbReference type="GO" id="GO:0003677">
    <property type="term" value="F:DNA binding"/>
    <property type="evidence" value="ECO:0007669"/>
    <property type="project" value="UniProtKB-UniRule"/>
</dbReference>
<dbReference type="GO" id="GO:0006355">
    <property type="term" value="P:regulation of DNA-templated transcription"/>
    <property type="evidence" value="ECO:0007669"/>
    <property type="project" value="UniProtKB-UniRule"/>
</dbReference>
<dbReference type="FunFam" id="1.10.10.200:FF:000002">
    <property type="entry name" value="Probable transcriptional regulatory protein CLM62_37755"/>
    <property type="match status" value="1"/>
</dbReference>
<dbReference type="Gene3D" id="1.10.10.200">
    <property type="match status" value="1"/>
</dbReference>
<dbReference type="Gene3D" id="3.30.70.980">
    <property type="match status" value="2"/>
</dbReference>
<dbReference type="HAMAP" id="MF_00693">
    <property type="entry name" value="Transcrip_reg_TACO1"/>
    <property type="match status" value="1"/>
</dbReference>
<dbReference type="InterPro" id="IPR017856">
    <property type="entry name" value="Integrase-like_N"/>
</dbReference>
<dbReference type="InterPro" id="IPR048300">
    <property type="entry name" value="TACO1_YebC-like_2nd/3rd_dom"/>
</dbReference>
<dbReference type="InterPro" id="IPR049083">
    <property type="entry name" value="TACO1_YebC_N"/>
</dbReference>
<dbReference type="InterPro" id="IPR002876">
    <property type="entry name" value="Transcrip_reg_TACO1-like"/>
</dbReference>
<dbReference type="InterPro" id="IPR026564">
    <property type="entry name" value="Transcrip_reg_TACO1-like_dom3"/>
</dbReference>
<dbReference type="InterPro" id="IPR029072">
    <property type="entry name" value="YebC-like"/>
</dbReference>
<dbReference type="NCBIfam" id="NF001030">
    <property type="entry name" value="PRK00110.1"/>
    <property type="match status" value="1"/>
</dbReference>
<dbReference type="NCBIfam" id="NF009044">
    <property type="entry name" value="PRK12378.1"/>
    <property type="match status" value="1"/>
</dbReference>
<dbReference type="NCBIfam" id="TIGR01033">
    <property type="entry name" value="YebC/PmpR family DNA-binding transcriptional regulator"/>
    <property type="match status" value="1"/>
</dbReference>
<dbReference type="PANTHER" id="PTHR12532:SF6">
    <property type="entry name" value="TRANSCRIPTIONAL REGULATORY PROTEIN YEBC-RELATED"/>
    <property type="match status" value="1"/>
</dbReference>
<dbReference type="PANTHER" id="PTHR12532">
    <property type="entry name" value="TRANSLATIONAL ACTIVATOR OF CYTOCHROME C OXIDASE 1"/>
    <property type="match status" value="1"/>
</dbReference>
<dbReference type="Pfam" id="PF20772">
    <property type="entry name" value="TACO1_YebC_N"/>
    <property type="match status" value="1"/>
</dbReference>
<dbReference type="Pfam" id="PF01709">
    <property type="entry name" value="Transcrip_reg"/>
    <property type="match status" value="1"/>
</dbReference>
<dbReference type="SUPFAM" id="SSF75625">
    <property type="entry name" value="YebC-like"/>
    <property type="match status" value="1"/>
</dbReference>
<gene>
    <name type="ordered locus">Dshi_2762</name>
</gene>
<accession>A8LJ00</accession>
<protein>
    <recommendedName>
        <fullName evidence="1">Probable transcriptional regulatory protein Dshi_2762</fullName>
    </recommendedName>
</protein>
<evidence type="ECO:0000255" key="1">
    <source>
        <dbReference type="HAMAP-Rule" id="MF_00693"/>
    </source>
</evidence>
<reference key="1">
    <citation type="journal article" date="2010" name="ISME J.">
        <title>The complete genome sequence of the algal symbiont Dinoroseobacter shibae: a hitchhiker's guide to life in the sea.</title>
        <authorList>
            <person name="Wagner-Dobler I."/>
            <person name="Ballhausen B."/>
            <person name="Berger M."/>
            <person name="Brinkhoff T."/>
            <person name="Buchholz I."/>
            <person name="Bunk B."/>
            <person name="Cypionka H."/>
            <person name="Daniel R."/>
            <person name="Drepper T."/>
            <person name="Gerdts G."/>
            <person name="Hahnke S."/>
            <person name="Han C."/>
            <person name="Jahn D."/>
            <person name="Kalhoefer D."/>
            <person name="Kiss H."/>
            <person name="Klenk H.P."/>
            <person name="Kyrpides N."/>
            <person name="Liebl W."/>
            <person name="Liesegang H."/>
            <person name="Meincke L."/>
            <person name="Pati A."/>
            <person name="Petersen J."/>
            <person name="Piekarski T."/>
            <person name="Pommerenke C."/>
            <person name="Pradella S."/>
            <person name="Pukall R."/>
            <person name="Rabus R."/>
            <person name="Stackebrandt E."/>
            <person name="Thole S."/>
            <person name="Thompson L."/>
            <person name="Tielen P."/>
            <person name="Tomasch J."/>
            <person name="von Jan M."/>
            <person name="Wanphrut N."/>
            <person name="Wichels A."/>
            <person name="Zech H."/>
            <person name="Simon M."/>
        </authorList>
    </citation>
    <scope>NUCLEOTIDE SEQUENCE [LARGE SCALE GENOMIC DNA]</scope>
    <source>
        <strain>DSM 16493 / NCIMB 14021 / DFL 12</strain>
    </source>
</reference>